<evidence type="ECO:0000250" key="1"/>
<evidence type="ECO:0000250" key="2">
    <source>
        <dbReference type="UniProtKB" id="P37231"/>
    </source>
</evidence>
<evidence type="ECO:0000250" key="3">
    <source>
        <dbReference type="UniProtKB" id="P37238"/>
    </source>
</evidence>
<evidence type="ECO:0000255" key="4">
    <source>
        <dbReference type="PROSITE-ProRule" id="PRU00407"/>
    </source>
</evidence>
<evidence type="ECO:0000255" key="5">
    <source>
        <dbReference type="PROSITE-ProRule" id="PRU01189"/>
    </source>
</evidence>
<evidence type="ECO:0000305" key="6"/>
<feature type="chain" id="PRO_0000053491" description="Peroxisome proliferator-activated receptor gamma">
    <location>
        <begin position="1"/>
        <end position="475"/>
    </location>
</feature>
<feature type="domain" description="NR LBD" evidence="5">
    <location>
        <begin position="208"/>
        <end position="473"/>
    </location>
</feature>
<feature type="DNA-binding region" description="Nuclear receptor" evidence="4">
    <location>
        <begin position="106"/>
        <end position="180"/>
    </location>
</feature>
<feature type="zinc finger region" description="NR C4-type" evidence="4">
    <location>
        <begin position="109"/>
        <end position="129"/>
    </location>
</feature>
<feature type="zinc finger region" description="NR C4-type" evidence="4">
    <location>
        <begin position="146"/>
        <end position="168"/>
    </location>
</feature>
<feature type="region of interest" description="Interaction with FAM120B" evidence="1">
    <location>
        <begin position="175"/>
        <end position="250"/>
    </location>
</feature>
<feature type="short sequence motif" description="9aaTAD" evidence="2">
    <location>
        <begin position="465"/>
        <end position="473"/>
    </location>
</feature>
<feature type="modified residue" description="Phosphoserine; by MAPK" evidence="3">
    <location>
        <position position="82"/>
    </location>
</feature>
<feature type="glycosylation site" description="O-linked (GlcNAc) threonine" evidence="1">
    <location>
        <position position="54"/>
    </location>
</feature>
<feature type="cross-link" description="Glycyl lysine isopeptide (Lys-Gly) (interchain with G-Cter in ubiquitin)" evidence="2">
    <location>
        <position position="222"/>
    </location>
</feature>
<name>PPARG_CRIGR</name>
<comment type="function">
    <text evidence="2 3">Nuclear receptor that binds peroxisome proliferators such as hypolipidemic drugs and fatty acids. Once activated by a ligand, the nuclear receptor binds to DNA specific PPAR response elements (PPRE) and modulates the transcription of its target genes, such as acyl-CoA oxidase. It therefore controls the peroxisomal beta-oxidation pathway of fatty acids. Key regulator of adipocyte differentiation and glucose homeostasis. ARF6 acts as a key regulator of the tissue-specific adipocyte P2 (aP2) enhancer. Acts as a critical regulator of gut homeostasis by suppressing NF-kappa-B-mediated pro-inflammatory responses. Plays a role in the regulation of cardiovascular circadian rhythms by regulating the transcription of BMAL1 in the blood vessels.</text>
</comment>
<comment type="activity regulation">
    <text evidence="1">PDPK1 activates its transcriptional activity independently of its kinase activity. Interacts with HELZ2 and THRAP3; the interaction enhances the transcriptional activity of PPARG (By similarity).</text>
</comment>
<comment type="subunit">
    <text evidence="2 3">Interacts with FOXO1 (acetylated form) (By similarity). Heterodimer with other nuclear receptors, such as RXRA. The heterodimer with the retinoic acid receptor RXRA is called adipocyte-specific transcription factor ARF6. Interacts with NCOA6 coactivator, leading to a strong increase in transcription of target genes. Interacts with coactivator PPARBP, leading to a mild increase in transcription of target genes. Interacts with NOCA7 in a ligand-inducible manner. Interacts with NCOA1 and NCOA2 LXXLL motifs. Interacts with ASXL1, ASXL2, DNTTIP2, FAM120B, MAP2K1/MEK1, NR0B2, PDPK1, PRDM16, PRMT2 and TGFB1I1. Interacts (when activated by agonist) with PPP5C. Interacts with HELZ2 and THRAP3; the interaction stimulates the transcriptional activity of PPARG. Interacts with PER2, the interaction is ligand dependent and blocks PPARG recruitment to target promoters. Interacts with NOCT. Interacts with ACTN4. Interacts (when in the liganded conformation) with GPS2 (By similarity). Interacts with CRY1 and CRY2 in a ligand-dependent manner (By similarity). In the absence of hormonal ligand, interacts with TACC1 (By similarity). In macrophages, interacts with PAQR3 and STUB1; the interactions promote PPARG poylubiquitination and STUB1-mediated degradation (By similarity).</text>
</comment>
<comment type="subcellular location">
    <subcellularLocation>
        <location evidence="4">Nucleus</location>
    </subcellularLocation>
    <subcellularLocation>
        <location evidence="1">Cytoplasm</location>
    </subcellularLocation>
    <text evidence="1">Redistributed from the nucleus to the cytosol through a MAP2K1/MEK1-dependent manner. NOCT enhances its nuclear translocation (By similarity).</text>
</comment>
<comment type="domain">
    <text evidence="2">The 9aaTAD motif is a transactivation domain present in a large number of yeast and animal transcription factors.</text>
</comment>
<comment type="PTM">
    <text evidence="3">O-GlcNAcylation at Thr-54 reduces transcriptional activity in adipocytes.</text>
</comment>
<comment type="PTM">
    <text evidence="2">Phosphorylated at basal conditions and dephosphorylated when treated with the ligand. May be dephosphorylated by PPP5C. The phosphorylated form may be inactive and dephosphorylation induces adipogenic activity (By similarity).</text>
</comment>
<comment type="PTM">
    <text evidence="2 3">Ubiquitinated by E3 ubiquitin-protein ligase complex containing FBXO9; leading to proteasomal degradation (By similarity). Ubiquitinated at Lys-222 by TRIM55 leading to proteasomal degradation (By similarity). Ubiquitinated by E3 ubiquitin-protein ligase STUB1/CHIP; leading to proteasomal degradation (By similarity).</text>
</comment>
<comment type="similarity">
    <text evidence="6">Belongs to the nuclear hormone receptor family. NR1 subfamily.</text>
</comment>
<proteinExistence type="evidence at transcript level"/>
<sequence length="475" mass="54473">MVDTEMPFWPTNFGISSVDLSMMDDHSHSFDIKPFTTVDFSSISAPHYEDIPFTRADPMVADYKYDLKLQEYQSAIKVEPASPPYYSEKAQLYNRPHEEPSNSLMAIECRVCGDKASGFHYGVHACEGCKGFFRRTIRLKLIYDRCDLNCRIHKKSRNKCQYCRFQKCLAVGMSHNAIRFGRMPQAEKEKLLAEISSDIDQLNPESADLRALAKHLYDSYIKSFPLTKAKARAILTGKTTDKSPFVIYDMNSLMMGEDKIKFKHITPLQEQSKEVAIRIFQGCQFRSVEAVQEITEYAKNIPGFINLDLNDQVTLLKYGVHEIIYTMLASLMNKDGVLISEGQGFMTREFLKSLRKPFGDFMEPKFEFAVKFNALELDDSDLAIFIAVIILSGDRPGLLNVKPIEDIQDNLLQALELQLKLNHPESSQLFAKVLQKMTDLRQIVTEHVQLLHVIKKTETDMSLHPLLQEIYKDLY</sequence>
<accession>P57797</accession>
<dbReference type="EMBL" id="Z30972">
    <property type="protein sequence ID" value="CAA83219.1"/>
    <property type="molecule type" value="mRNA"/>
</dbReference>
<dbReference type="PIR" id="JC4264">
    <property type="entry name" value="JC4264"/>
</dbReference>
<dbReference type="RefSeq" id="NP_001231210.1">
    <property type="nucleotide sequence ID" value="NM_001244281.1"/>
</dbReference>
<dbReference type="SMR" id="P57797"/>
<dbReference type="GlyCosmos" id="P57797">
    <property type="glycosylation" value="1 site, No reported glycans"/>
</dbReference>
<dbReference type="PaxDb" id="10029-NP_001231210.1"/>
<dbReference type="Ensembl" id="ENSCGRT00001016677.1">
    <property type="protein sequence ID" value="ENSCGRP00001012443.1"/>
    <property type="gene ID" value="ENSCGRG00001013849.1"/>
</dbReference>
<dbReference type="GeneID" id="100689245"/>
<dbReference type="KEGG" id="cge:100689245"/>
<dbReference type="CTD" id="5468"/>
<dbReference type="eggNOG" id="KOG3575">
    <property type="taxonomic scope" value="Eukaryota"/>
</dbReference>
<dbReference type="GeneTree" id="ENSGT00940000158273"/>
<dbReference type="OrthoDB" id="7634782at2759"/>
<dbReference type="Proteomes" id="UP000694386">
    <property type="component" value="Unplaced"/>
</dbReference>
<dbReference type="Proteomes" id="UP001108280">
    <property type="component" value="Chromosome 8"/>
</dbReference>
<dbReference type="GO" id="GO:0005737">
    <property type="term" value="C:cytoplasm"/>
    <property type="evidence" value="ECO:0007669"/>
    <property type="project" value="UniProtKB-SubCell"/>
</dbReference>
<dbReference type="GO" id="GO:0005634">
    <property type="term" value="C:nucleus"/>
    <property type="evidence" value="ECO:0007669"/>
    <property type="project" value="UniProtKB-SubCell"/>
</dbReference>
<dbReference type="GO" id="GO:0003682">
    <property type="term" value="F:chromatin binding"/>
    <property type="evidence" value="ECO:0000250"/>
    <property type="project" value="UniProtKB"/>
</dbReference>
<dbReference type="GO" id="GO:0003700">
    <property type="term" value="F:DNA-binding transcription factor activity"/>
    <property type="evidence" value="ECO:0000250"/>
    <property type="project" value="UniProtKB"/>
</dbReference>
<dbReference type="GO" id="GO:0001227">
    <property type="term" value="F:DNA-binding transcription repressor activity, RNA polymerase II-specific"/>
    <property type="evidence" value="ECO:0007669"/>
    <property type="project" value="TreeGrafter"/>
</dbReference>
<dbReference type="GO" id="GO:0070888">
    <property type="term" value="F:E-box binding"/>
    <property type="evidence" value="ECO:0000250"/>
    <property type="project" value="UniProtKB"/>
</dbReference>
<dbReference type="GO" id="GO:0004879">
    <property type="term" value="F:nuclear receptor activity"/>
    <property type="evidence" value="ECO:0000250"/>
    <property type="project" value="UniProtKB"/>
</dbReference>
<dbReference type="GO" id="GO:0000976">
    <property type="term" value="F:transcription cis-regulatory region binding"/>
    <property type="evidence" value="ECO:0000250"/>
    <property type="project" value="UniProtKB"/>
</dbReference>
<dbReference type="GO" id="GO:0008270">
    <property type="term" value="F:zinc ion binding"/>
    <property type="evidence" value="ECO:0007669"/>
    <property type="project" value="UniProtKB-KW"/>
</dbReference>
<dbReference type="GO" id="GO:0030154">
    <property type="term" value="P:cell differentiation"/>
    <property type="evidence" value="ECO:0007669"/>
    <property type="project" value="TreeGrafter"/>
</dbReference>
<dbReference type="GO" id="GO:0032869">
    <property type="term" value="P:cellular response to insulin stimulus"/>
    <property type="evidence" value="ECO:0000250"/>
    <property type="project" value="UniProtKB"/>
</dbReference>
<dbReference type="GO" id="GO:0006631">
    <property type="term" value="P:fatty acid metabolic process"/>
    <property type="evidence" value="ECO:0007669"/>
    <property type="project" value="TreeGrafter"/>
</dbReference>
<dbReference type="GO" id="GO:0010887">
    <property type="term" value="P:negative regulation of cholesterol storage"/>
    <property type="evidence" value="ECO:0007669"/>
    <property type="project" value="TreeGrafter"/>
</dbReference>
<dbReference type="GO" id="GO:0050728">
    <property type="term" value="P:negative regulation of inflammatory response"/>
    <property type="evidence" value="ECO:0007669"/>
    <property type="project" value="TreeGrafter"/>
</dbReference>
<dbReference type="GO" id="GO:0035357">
    <property type="term" value="P:peroxisome proliferator activated receptor signaling pathway"/>
    <property type="evidence" value="ECO:0000250"/>
    <property type="project" value="UniProtKB"/>
</dbReference>
<dbReference type="GO" id="GO:0045893">
    <property type="term" value="P:positive regulation of DNA-templated transcription"/>
    <property type="evidence" value="ECO:0000250"/>
    <property type="project" value="UniProtKB"/>
</dbReference>
<dbReference type="GO" id="GO:0045600">
    <property type="term" value="P:positive regulation of fat cell differentiation"/>
    <property type="evidence" value="ECO:0000250"/>
    <property type="project" value="UniProtKB"/>
</dbReference>
<dbReference type="GO" id="GO:0045923">
    <property type="term" value="P:positive regulation of fatty acid metabolic process"/>
    <property type="evidence" value="ECO:0007669"/>
    <property type="project" value="TreeGrafter"/>
</dbReference>
<dbReference type="GO" id="GO:0045944">
    <property type="term" value="P:positive regulation of transcription by RNA polymerase II"/>
    <property type="evidence" value="ECO:0000250"/>
    <property type="project" value="UniProtKB"/>
</dbReference>
<dbReference type="GO" id="GO:0042752">
    <property type="term" value="P:regulation of circadian rhythm"/>
    <property type="evidence" value="ECO:0000250"/>
    <property type="project" value="UniProtKB"/>
</dbReference>
<dbReference type="GO" id="GO:0006355">
    <property type="term" value="P:regulation of DNA-templated transcription"/>
    <property type="evidence" value="ECO:0000250"/>
    <property type="project" value="UniProtKB"/>
</dbReference>
<dbReference type="GO" id="GO:0006357">
    <property type="term" value="P:regulation of transcription by RNA polymerase II"/>
    <property type="evidence" value="ECO:0000250"/>
    <property type="project" value="UniProtKB"/>
</dbReference>
<dbReference type="GO" id="GO:0048384">
    <property type="term" value="P:retinoic acid receptor signaling pathway"/>
    <property type="evidence" value="ECO:0000250"/>
    <property type="project" value="UniProtKB"/>
</dbReference>
<dbReference type="GO" id="GO:0048511">
    <property type="term" value="P:rhythmic process"/>
    <property type="evidence" value="ECO:0007669"/>
    <property type="project" value="UniProtKB-KW"/>
</dbReference>
<dbReference type="CDD" id="cd06965">
    <property type="entry name" value="NR_DBD_Ppar"/>
    <property type="match status" value="1"/>
</dbReference>
<dbReference type="CDD" id="cd06932">
    <property type="entry name" value="NR_LBD_PPAR"/>
    <property type="match status" value="1"/>
</dbReference>
<dbReference type="FunFam" id="1.10.565.10:FF:000017">
    <property type="entry name" value="Peroxisome proliferator-activated receptor gamma"/>
    <property type="match status" value="1"/>
</dbReference>
<dbReference type="FunFam" id="3.30.50.10:FF:000010">
    <property type="entry name" value="Peroxisome proliferator-activated receptor gamma"/>
    <property type="match status" value="1"/>
</dbReference>
<dbReference type="Gene3D" id="3.30.50.10">
    <property type="entry name" value="Erythroid Transcription Factor GATA-1, subunit A"/>
    <property type="match status" value="1"/>
</dbReference>
<dbReference type="Gene3D" id="1.10.565.10">
    <property type="entry name" value="Retinoid X Receptor"/>
    <property type="match status" value="1"/>
</dbReference>
<dbReference type="InterPro" id="IPR003074">
    <property type="entry name" value="1Cnucl_rcpt"/>
</dbReference>
<dbReference type="InterPro" id="IPR035500">
    <property type="entry name" value="NHR-like_dom_sf"/>
</dbReference>
<dbReference type="InterPro" id="IPR000536">
    <property type="entry name" value="Nucl_hrmn_rcpt_lig-bd"/>
</dbReference>
<dbReference type="InterPro" id="IPR050234">
    <property type="entry name" value="Nuclear_hormone_rcpt_NR1"/>
</dbReference>
<dbReference type="InterPro" id="IPR001723">
    <property type="entry name" value="Nuclear_hrmn_rcpt"/>
</dbReference>
<dbReference type="InterPro" id="IPR003077">
    <property type="entry name" value="PPAR-gamma"/>
</dbReference>
<dbReference type="InterPro" id="IPR022590">
    <property type="entry name" value="PPARgamma_N"/>
</dbReference>
<dbReference type="InterPro" id="IPR001628">
    <property type="entry name" value="Znf_hrmn_rcpt"/>
</dbReference>
<dbReference type="InterPro" id="IPR013088">
    <property type="entry name" value="Znf_NHR/GATA"/>
</dbReference>
<dbReference type="PANTHER" id="PTHR24082">
    <property type="entry name" value="NUCLEAR HORMONE RECEPTOR"/>
    <property type="match status" value="1"/>
</dbReference>
<dbReference type="PANTHER" id="PTHR24082:SF488">
    <property type="entry name" value="PEROXISOME PROLIFERATOR-ACTIVATED RECEPTOR GAMMA"/>
    <property type="match status" value="1"/>
</dbReference>
<dbReference type="Pfam" id="PF00104">
    <property type="entry name" value="Hormone_recep"/>
    <property type="match status" value="1"/>
</dbReference>
<dbReference type="Pfam" id="PF12577">
    <property type="entry name" value="PPARgamma_N"/>
    <property type="match status" value="1"/>
</dbReference>
<dbReference type="Pfam" id="PF00105">
    <property type="entry name" value="zf-C4"/>
    <property type="match status" value="1"/>
</dbReference>
<dbReference type="PRINTS" id="PR01288">
    <property type="entry name" value="PROXISOMEPAR"/>
</dbReference>
<dbReference type="PRINTS" id="PR01291">
    <property type="entry name" value="PROXISOMPAGR"/>
</dbReference>
<dbReference type="PRINTS" id="PR00398">
    <property type="entry name" value="STRDHORMONER"/>
</dbReference>
<dbReference type="PRINTS" id="PR00047">
    <property type="entry name" value="STROIDFINGER"/>
</dbReference>
<dbReference type="SMART" id="SM00430">
    <property type="entry name" value="HOLI"/>
    <property type="match status" value="1"/>
</dbReference>
<dbReference type="SMART" id="SM00399">
    <property type="entry name" value="ZnF_C4"/>
    <property type="match status" value="1"/>
</dbReference>
<dbReference type="SUPFAM" id="SSF57716">
    <property type="entry name" value="Glucocorticoid receptor-like (DNA-binding domain)"/>
    <property type="match status" value="1"/>
</dbReference>
<dbReference type="SUPFAM" id="SSF48508">
    <property type="entry name" value="Nuclear receptor ligand-binding domain"/>
    <property type="match status" value="1"/>
</dbReference>
<dbReference type="PROSITE" id="PS51843">
    <property type="entry name" value="NR_LBD"/>
    <property type="match status" value="1"/>
</dbReference>
<dbReference type="PROSITE" id="PS00031">
    <property type="entry name" value="NUCLEAR_REC_DBD_1"/>
    <property type="match status" value="1"/>
</dbReference>
<dbReference type="PROSITE" id="PS51030">
    <property type="entry name" value="NUCLEAR_REC_DBD_2"/>
    <property type="match status" value="1"/>
</dbReference>
<organism>
    <name type="scientific">Cricetulus griseus</name>
    <name type="common">Chinese hamster</name>
    <name type="synonym">Cricetulus barabensis griseus</name>
    <dbReference type="NCBI Taxonomy" id="10029"/>
    <lineage>
        <taxon>Eukaryota</taxon>
        <taxon>Metazoa</taxon>
        <taxon>Chordata</taxon>
        <taxon>Craniata</taxon>
        <taxon>Vertebrata</taxon>
        <taxon>Euteleostomi</taxon>
        <taxon>Mammalia</taxon>
        <taxon>Eutheria</taxon>
        <taxon>Euarchontoglires</taxon>
        <taxon>Glires</taxon>
        <taxon>Rodentia</taxon>
        <taxon>Myomorpha</taxon>
        <taxon>Muroidea</taxon>
        <taxon>Cricetidae</taxon>
        <taxon>Cricetinae</taxon>
        <taxon>Cricetulus</taxon>
    </lineage>
</organism>
<reference key="1">
    <citation type="journal article" date="1995" name="Gene">
        <title>cDNA cloning and characterization of the transcriptional activities of the hamster peroxisome proliferator-activated receptor haPPAR gamma.</title>
        <authorList>
            <person name="Aperlo C."/>
            <person name="Pognonec P."/>
            <person name="Saladin R."/>
            <person name="Auwerx J."/>
            <person name="Boulukos K.E."/>
        </authorList>
    </citation>
    <scope>NUCLEOTIDE SEQUENCE [MRNA]</scope>
    <source>
        <tissue>Liver</tissue>
    </source>
</reference>
<keyword id="KW-0010">Activator</keyword>
<keyword id="KW-0090">Biological rhythms</keyword>
<keyword id="KW-0963">Cytoplasm</keyword>
<keyword id="KW-0238">DNA-binding</keyword>
<keyword id="KW-0325">Glycoprotein</keyword>
<keyword id="KW-1017">Isopeptide bond</keyword>
<keyword id="KW-0479">Metal-binding</keyword>
<keyword id="KW-0539">Nucleus</keyword>
<keyword id="KW-0597">Phosphoprotein</keyword>
<keyword id="KW-0675">Receptor</keyword>
<keyword id="KW-0804">Transcription</keyword>
<keyword id="KW-0805">Transcription regulation</keyword>
<keyword id="KW-0832">Ubl conjugation</keyword>
<keyword id="KW-0862">Zinc</keyword>
<keyword id="KW-0863">Zinc-finger</keyword>
<protein>
    <recommendedName>
        <fullName>Peroxisome proliferator-activated receptor gamma</fullName>
        <shortName>PPAR-gamma</shortName>
    </recommendedName>
    <alternativeName>
        <fullName>Nuclear receptor subfamily 1 group C member 3</fullName>
    </alternativeName>
</protein>
<gene>
    <name type="primary">PPARG</name>
    <name type="synonym">NR1C3</name>
</gene>